<protein>
    <recommendedName>
        <fullName evidence="1">Bifunctional protein FolD</fullName>
    </recommendedName>
    <domain>
        <recommendedName>
            <fullName evidence="1">Methylenetetrahydrofolate dehydrogenase</fullName>
            <ecNumber evidence="1">1.5.1.5</ecNumber>
        </recommendedName>
    </domain>
    <domain>
        <recommendedName>
            <fullName evidence="1">Methenyltetrahydrofolate cyclohydrolase</fullName>
            <ecNumber evidence="1">3.5.4.9</ecNumber>
        </recommendedName>
    </domain>
</protein>
<dbReference type="EC" id="1.5.1.5" evidence="1"/>
<dbReference type="EC" id="3.5.4.9" evidence="1"/>
<dbReference type="EMBL" id="CP000390">
    <property type="protein sequence ID" value="ABG61557.1"/>
    <property type="molecule type" value="Genomic_DNA"/>
</dbReference>
<dbReference type="SMR" id="Q11M18"/>
<dbReference type="STRING" id="266779.Meso_0152"/>
<dbReference type="KEGG" id="mes:Meso_0152"/>
<dbReference type="eggNOG" id="COG0190">
    <property type="taxonomic scope" value="Bacteria"/>
</dbReference>
<dbReference type="HOGENOM" id="CLU_034045_1_2_5"/>
<dbReference type="OrthoDB" id="9803580at2"/>
<dbReference type="UniPathway" id="UPA00193"/>
<dbReference type="GO" id="GO:0005829">
    <property type="term" value="C:cytosol"/>
    <property type="evidence" value="ECO:0007669"/>
    <property type="project" value="TreeGrafter"/>
</dbReference>
<dbReference type="GO" id="GO:0004477">
    <property type="term" value="F:methenyltetrahydrofolate cyclohydrolase activity"/>
    <property type="evidence" value="ECO:0007669"/>
    <property type="project" value="UniProtKB-UniRule"/>
</dbReference>
<dbReference type="GO" id="GO:0004488">
    <property type="term" value="F:methylenetetrahydrofolate dehydrogenase (NADP+) activity"/>
    <property type="evidence" value="ECO:0007669"/>
    <property type="project" value="UniProtKB-UniRule"/>
</dbReference>
<dbReference type="GO" id="GO:0000105">
    <property type="term" value="P:L-histidine biosynthetic process"/>
    <property type="evidence" value="ECO:0007669"/>
    <property type="project" value="UniProtKB-KW"/>
</dbReference>
<dbReference type="GO" id="GO:0009086">
    <property type="term" value="P:methionine biosynthetic process"/>
    <property type="evidence" value="ECO:0007669"/>
    <property type="project" value="UniProtKB-KW"/>
</dbReference>
<dbReference type="GO" id="GO:0006164">
    <property type="term" value="P:purine nucleotide biosynthetic process"/>
    <property type="evidence" value="ECO:0007669"/>
    <property type="project" value="UniProtKB-KW"/>
</dbReference>
<dbReference type="GO" id="GO:0035999">
    <property type="term" value="P:tetrahydrofolate interconversion"/>
    <property type="evidence" value="ECO:0007669"/>
    <property type="project" value="UniProtKB-UniRule"/>
</dbReference>
<dbReference type="CDD" id="cd01080">
    <property type="entry name" value="NAD_bind_m-THF_DH_Cyclohyd"/>
    <property type="match status" value="1"/>
</dbReference>
<dbReference type="FunFam" id="3.40.50.720:FF:000006">
    <property type="entry name" value="Bifunctional protein FolD"/>
    <property type="match status" value="1"/>
</dbReference>
<dbReference type="FunFam" id="3.40.50.10860:FF:000005">
    <property type="entry name" value="C-1-tetrahydrofolate synthase, cytoplasmic, putative"/>
    <property type="match status" value="1"/>
</dbReference>
<dbReference type="Gene3D" id="3.40.50.10860">
    <property type="entry name" value="Leucine Dehydrogenase, chain A, domain 1"/>
    <property type="match status" value="1"/>
</dbReference>
<dbReference type="Gene3D" id="3.40.50.720">
    <property type="entry name" value="NAD(P)-binding Rossmann-like Domain"/>
    <property type="match status" value="1"/>
</dbReference>
<dbReference type="HAMAP" id="MF_01576">
    <property type="entry name" value="THF_DHG_CYH"/>
    <property type="match status" value="1"/>
</dbReference>
<dbReference type="InterPro" id="IPR046346">
    <property type="entry name" value="Aminoacid_DH-like_N_sf"/>
</dbReference>
<dbReference type="InterPro" id="IPR036291">
    <property type="entry name" value="NAD(P)-bd_dom_sf"/>
</dbReference>
<dbReference type="InterPro" id="IPR000672">
    <property type="entry name" value="THF_DH/CycHdrlase"/>
</dbReference>
<dbReference type="InterPro" id="IPR020630">
    <property type="entry name" value="THF_DH/CycHdrlase_cat_dom"/>
</dbReference>
<dbReference type="InterPro" id="IPR020867">
    <property type="entry name" value="THF_DH/CycHdrlase_CS"/>
</dbReference>
<dbReference type="InterPro" id="IPR020631">
    <property type="entry name" value="THF_DH/CycHdrlase_NAD-bd_dom"/>
</dbReference>
<dbReference type="NCBIfam" id="NF010785">
    <property type="entry name" value="PRK14188.1"/>
    <property type="match status" value="1"/>
</dbReference>
<dbReference type="PANTHER" id="PTHR48099:SF5">
    <property type="entry name" value="C-1-TETRAHYDROFOLATE SYNTHASE, CYTOPLASMIC"/>
    <property type="match status" value="1"/>
</dbReference>
<dbReference type="PANTHER" id="PTHR48099">
    <property type="entry name" value="C-1-TETRAHYDROFOLATE SYNTHASE, CYTOPLASMIC-RELATED"/>
    <property type="match status" value="1"/>
</dbReference>
<dbReference type="Pfam" id="PF00763">
    <property type="entry name" value="THF_DHG_CYH"/>
    <property type="match status" value="1"/>
</dbReference>
<dbReference type="Pfam" id="PF02882">
    <property type="entry name" value="THF_DHG_CYH_C"/>
    <property type="match status" value="1"/>
</dbReference>
<dbReference type="PRINTS" id="PR00085">
    <property type="entry name" value="THFDHDRGNASE"/>
</dbReference>
<dbReference type="SUPFAM" id="SSF53223">
    <property type="entry name" value="Aminoacid dehydrogenase-like, N-terminal domain"/>
    <property type="match status" value="1"/>
</dbReference>
<dbReference type="SUPFAM" id="SSF51735">
    <property type="entry name" value="NAD(P)-binding Rossmann-fold domains"/>
    <property type="match status" value="1"/>
</dbReference>
<dbReference type="PROSITE" id="PS00766">
    <property type="entry name" value="THF_DHG_CYH_1"/>
    <property type="match status" value="1"/>
</dbReference>
<dbReference type="PROSITE" id="PS00767">
    <property type="entry name" value="THF_DHG_CYH_2"/>
    <property type="match status" value="1"/>
</dbReference>
<proteinExistence type="inferred from homology"/>
<evidence type="ECO:0000255" key="1">
    <source>
        <dbReference type="HAMAP-Rule" id="MF_01576"/>
    </source>
</evidence>
<accession>Q11M18</accession>
<gene>
    <name evidence="1" type="primary">folD</name>
    <name type="ordered locus">Meso_0152</name>
</gene>
<comment type="function">
    <text evidence="1">Catalyzes the oxidation of 5,10-methylenetetrahydrofolate to 5,10-methenyltetrahydrofolate and then the hydrolysis of 5,10-methenyltetrahydrofolate to 10-formyltetrahydrofolate.</text>
</comment>
<comment type="catalytic activity">
    <reaction evidence="1">
        <text>(6R)-5,10-methylene-5,6,7,8-tetrahydrofolate + NADP(+) = (6R)-5,10-methenyltetrahydrofolate + NADPH</text>
        <dbReference type="Rhea" id="RHEA:22812"/>
        <dbReference type="ChEBI" id="CHEBI:15636"/>
        <dbReference type="ChEBI" id="CHEBI:57455"/>
        <dbReference type="ChEBI" id="CHEBI:57783"/>
        <dbReference type="ChEBI" id="CHEBI:58349"/>
        <dbReference type="EC" id="1.5.1.5"/>
    </reaction>
</comment>
<comment type="catalytic activity">
    <reaction evidence="1">
        <text>(6R)-5,10-methenyltetrahydrofolate + H2O = (6R)-10-formyltetrahydrofolate + H(+)</text>
        <dbReference type="Rhea" id="RHEA:23700"/>
        <dbReference type="ChEBI" id="CHEBI:15377"/>
        <dbReference type="ChEBI" id="CHEBI:15378"/>
        <dbReference type="ChEBI" id="CHEBI:57455"/>
        <dbReference type="ChEBI" id="CHEBI:195366"/>
        <dbReference type="EC" id="3.5.4.9"/>
    </reaction>
</comment>
<comment type="pathway">
    <text evidence="1">One-carbon metabolism; tetrahydrofolate interconversion.</text>
</comment>
<comment type="subunit">
    <text evidence="1">Homodimer.</text>
</comment>
<comment type="similarity">
    <text evidence="1">Belongs to the tetrahydrofolate dehydrogenase/cyclohydrolase family.</text>
</comment>
<keyword id="KW-0028">Amino-acid biosynthesis</keyword>
<keyword id="KW-0368">Histidine biosynthesis</keyword>
<keyword id="KW-0378">Hydrolase</keyword>
<keyword id="KW-0486">Methionine biosynthesis</keyword>
<keyword id="KW-0511">Multifunctional enzyme</keyword>
<keyword id="KW-0521">NADP</keyword>
<keyword id="KW-0554">One-carbon metabolism</keyword>
<keyword id="KW-0560">Oxidoreductase</keyword>
<keyword id="KW-0658">Purine biosynthesis</keyword>
<sequence>MVQIIDGKAVAATILEKVTRETQDLKANGVTPGLAVVIVGEDPASQVYVASKGRKATECGFHSVQHSLPENTSEEELVSLVEALNRDPAIHGILVQLPLPKQIDSERIIHTIAPEKDVDGFHILNVGMLGTGAVTKALVPCTPAGAMLLIEGVRGKDLSGLSAVVIGRSNIVGKPMANLLLAANATVTIAHSRTADLPAACRGADILVAAVGRPEMVKGDWIKPGATVIDVGVSRIPAPEKGEGKMKLVGDVAYAEAEKVAGAITPVPGGVGPMTIAMLMANTLAAASKASGRDLPAF</sequence>
<organism>
    <name type="scientific">Chelativorans sp. (strain BNC1)</name>
    <dbReference type="NCBI Taxonomy" id="266779"/>
    <lineage>
        <taxon>Bacteria</taxon>
        <taxon>Pseudomonadati</taxon>
        <taxon>Pseudomonadota</taxon>
        <taxon>Alphaproteobacteria</taxon>
        <taxon>Hyphomicrobiales</taxon>
        <taxon>Phyllobacteriaceae</taxon>
        <taxon>Chelativorans</taxon>
    </lineage>
</organism>
<feature type="chain" id="PRO_0000268395" description="Bifunctional protein FolD">
    <location>
        <begin position="1"/>
        <end position="298"/>
    </location>
</feature>
<feature type="binding site" evidence="1">
    <location>
        <begin position="167"/>
        <end position="169"/>
    </location>
    <ligand>
        <name>NADP(+)</name>
        <dbReference type="ChEBI" id="CHEBI:58349"/>
    </ligand>
</feature>
<feature type="binding site" evidence="1">
    <location>
        <position position="192"/>
    </location>
    <ligand>
        <name>NADP(+)</name>
        <dbReference type="ChEBI" id="CHEBI:58349"/>
    </ligand>
</feature>
<feature type="binding site" evidence="1">
    <location>
        <position position="233"/>
    </location>
    <ligand>
        <name>NADP(+)</name>
        <dbReference type="ChEBI" id="CHEBI:58349"/>
    </ligand>
</feature>
<reference key="1">
    <citation type="submission" date="2006-06" db="EMBL/GenBank/DDBJ databases">
        <title>Complete sequence of chromosome of Mesorhizobium sp. BNC1.</title>
        <authorList>
            <consortium name="US DOE Joint Genome Institute"/>
            <person name="Copeland A."/>
            <person name="Lucas S."/>
            <person name="Lapidus A."/>
            <person name="Barry K."/>
            <person name="Detter J.C."/>
            <person name="Glavina del Rio T."/>
            <person name="Hammon N."/>
            <person name="Israni S."/>
            <person name="Dalin E."/>
            <person name="Tice H."/>
            <person name="Pitluck S."/>
            <person name="Chertkov O."/>
            <person name="Brettin T."/>
            <person name="Bruce D."/>
            <person name="Han C."/>
            <person name="Tapia R."/>
            <person name="Gilna P."/>
            <person name="Schmutz J."/>
            <person name="Larimer F."/>
            <person name="Land M."/>
            <person name="Hauser L."/>
            <person name="Kyrpides N."/>
            <person name="Mikhailova N."/>
            <person name="Richardson P."/>
        </authorList>
    </citation>
    <scope>NUCLEOTIDE SEQUENCE [LARGE SCALE GENOMIC DNA]</scope>
    <source>
        <strain>BNC1</strain>
    </source>
</reference>
<name>FOLD_CHESB</name>